<evidence type="ECO:0000255" key="1">
    <source>
        <dbReference type="HAMAP-Rule" id="MF_02112"/>
    </source>
</evidence>
<protein>
    <recommendedName>
        <fullName evidence="1">AAA ATPase forming ring-shaped complexes</fullName>
        <shortName evidence="1">ARC</shortName>
    </recommendedName>
</protein>
<comment type="subunit">
    <text evidence="1">Homohexamer. Assembles into a hexameric ring structure.</text>
</comment>
<comment type="similarity">
    <text evidence="1">Belongs to the AAA ATPase family.</text>
</comment>
<feature type="chain" id="PRO_0000396981" description="AAA ATPase forming ring-shaped complexes">
    <location>
        <begin position="1"/>
        <end position="538"/>
    </location>
</feature>
<feature type="coiled-coil region" evidence="1">
    <location>
        <begin position="14"/>
        <end position="54"/>
    </location>
</feature>
<feature type="binding site" evidence="1">
    <location>
        <begin position="240"/>
        <end position="245"/>
    </location>
    <ligand>
        <name>ATP</name>
        <dbReference type="ChEBI" id="CHEBI:30616"/>
    </ligand>
</feature>
<name>ARC_CORU7</name>
<proteinExistence type="inferred from homology"/>
<gene>
    <name evidence="1" type="primary">arc</name>
    <name type="ordered locus">cu1040</name>
</gene>
<accession>B1VDV2</accession>
<reference key="1">
    <citation type="journal article" date="2008" name="J. Biotechnol.">
        <title>The lifestyle of Corynebacterium urealyticum derived from its complete genome sequence established by pyrosequencing.</title>
        <authorList>
            <person name="Tauch A."/>
            <person name="Trost E."/>
            <person name="Tilker A."/>
            <person name="Ludewig U."/>
            <person name="Schneiker S."/>
            <person name="Goesmann A."/>
            <person name="Arnold W."/>
            <person name="Bekel T."/>
            <person name="Brinkrolf K."/>
            <person name="Brune I."/>
            <person name="Goetker S."/>
            <person name="Kalinowski J."/>
            <person name="Kamp P.-B."/>
            <person name="Lobo F.P."/>
            <person name="Viehoever P."/>
            <person name="Weisshaar B."/>
            <person name="Soriano F."/>
            <person name="Droege M."/>
            <person name="Puehler A."/>
        </authorList>
    </citation>
    <scope>NUCLEOTIDE SEQUENCE [LARGE SCALE GENOMIC DNA]</scope>
    <source>
        <strain>ATCC 43042 / DSM 7109</strain>
    </source>
</reference>
<keyword id="KW-0067">ATP-binding</keyword>
<keyword id="KW-0175">Coiled coil</keyword>
<keyword id="KW-0547">Nucleotide-binding</keyword>
<keyword id="KW-1185">Reference proteome</keyword>
<organism>
    <name type="scientific">Corynebacterium urealyticum (strain ATCC 43042 / DSM 7109)</name>
    <dbReference type="NCBI Taxonomy" id="504474"/>
    <lineage>
        <taxon>Bacteria</taxon>
        <taxon>Bacillati</taxon>
        <taxon>Actinomycetota</taxon>
        <taxon>Actinomycetes</taxon>
        <taxon>Mycobacteriales</taxon>
        <taxon>Corynebacteriaceae</taxon>
        <taxon>Corynebacterium</taxon>
    </lineage>
</organism>
<dbReference type="EMBL" id="AM942444">
    <property type="protein sequence ID" value="CAQ05000.1"/>
    <property type="molecule type" value="Genomic_DNA"/>
</dbReference>
<dbReference type="RefSeq" id="WP_012360288.1">
    <property type="nucleotide sequence ID" value="NC_010545.1"/>
</dbReference>
<dbReference type="SMR" id="B1VDV2"/>
<dbReference type="STRING" id="504474.cu1040"/>
<dbReference type="GeneID" id="60603818"/>
<dbReference type="KEGG" id="cur:cu1040"/>
<dbReference type="eggNOG" id="COG1222">
    <property type="taxonomic scope" value="Bacteria"/>
</dbReference>
<dbReference type="HOGENOM" id="CLU_036054_0_0_11"/>
<dbReference type="Proteomes" id="UP000001727">
    <property type="component" value="Chromosome"/>
</dbReference>
<dbReference type="GO" id="GO:0000502">
    <property type="term" value="C:proteasome complex"/>
    <property type="evidence" value="ECO:0007669"/>
    <property type="project" value="InterPro"/>
</dbReference>
<dbReference type="GO" id="GO:0005524">
    <property type="term" value="F:ATP binding"/>
    <property type="evidence" value="ECO:0007669"/>
    <property type="project" value="UniProtKB-UniRule"/>
</dbReference>
<dbReference type="GO" id="GO:0016887">
    <property type="term" value="F:ATP hydrolysis activity"/>
    <property type="evidence" value="ECO:0007669"/>
    <property type="project" value="UniProtKB-UniRule"/>
</dbReference>
<dbReference type="GO" id="GO:0019941">
    <property type="term" value="P:modification-dependent protein catabolic process"/>
    <property type="evidence" value="ECO:0007669"/>
    <property type="project" value="InterPro"/>
</dbReference>
<dbReference type="GO" id="GO:0010498">
    <property type="term" value="P:proteasomal protein catabolic process"/>
    <property type="evidence" value="ECO:0007669"/>
    <property type="project" value="InterPro"/>
</dbReference>
<dbReference type="FunFam" id="3.40.50.300:FF:001025">
    <property type="entry name" value="ATPase family, AAA domain-containing 2B"/>
    <property type="match status" value="1"/>
</dbReference>
<dbReference type="Gene3D" id="1.10.8.60">
    <property type="match status" value="1"/>
</dbReference>
<dbReference type="Gene3D" id="1.20.5.170">
    <property type="match status" value="1"/>
</dbReference>
<dbReference type="Gene3D" id="2.40.50.140">
    <property type="entry name" value="Nucleic acid-binding proteins"/>
    <property type="match status" value="2"/>
</dbReference>
<dbReference type="Gene3D" id="3.40.50.300">
    <property type="entry name" value="P-loop containing nucleotide triphosphate hydrolases"/>
    <property type="match status" value="1"/>
</dbReference>
<dbReference type="HAMAP" id="MF_02112">
    <property type="entry name" value="ARC_ATPase"/>
    <property type="match status" value="1"/>
</dbReference>
<dbReference type="InterPro" id="IPR003593">
    <property type="entry name" value="AAA+_ATPase"/>
</dbReference>
<dbReference type="InterPro" id="IPR050168">
    <property type="entry name" value="AAA_ATPase_domain"/>
</dbReference>
<dbReference type="InterPro" id="IPR003959">
    <property type="entry name" value="ATPase_AAA_core"/>
</dbReference>
<dbReference type="InterPro" id="IPR003960">
    <property type="entry name" value="ATPase_AAA_CS"/>
</dbReference>
<dbReference type="InterPro" id="IPR012340">
    <property type="entry name" value="NA-bd_OB-fold"/>
</dbReference>
<dbReference type="InterPro" id="IPR027417">
    <property type="entry name" value="P-loop_NTPase"/>
</dbReference>
<dbReference type="InterPro" id="IPR032501">
    <property type="entry name" value="Prot_ATP_ID_OB_2nd"/>
</dbReference>
<dbReference type="InterPro" id="IPR041626">
    <property type="entry name" value="Prot_ATP_ID_OB_N"/>
</dbReference>
<dbReference type="InterPro" id="IPR022482">
    <property type="entry name" value="Proteasome_ATPase"/>
</dbReference>
<dbReference type="NCBIfam" id="TIGR03689">
    <property type="entry name" value="pup_AAA"/>
    <property type="match status" value="1"/>
</dbReference>
<dbReference type="PANTHER" id="PTHR23077">
    <property type="entry name" value="AAA-FAMILY ATPASE"/>
    <property type="match status" value="1"/>
</dbReference>
<dbReference type="PANTHER" id="PTHR23077:SF144">
    <property type="entry name" value="PROTEASOME-ASSOCIATED ATPASE"/>
    <property type="match status" value="1"/>
</dbReference>
<dbReference type="Pfam" id="PF00004">
    <property type="entry name" value="AAA"/>
    <property type="match status" value="1"/>
</dbReference>
<dbReference type="Pfam" id="PF16450">
    <property type="entry name" value="Prot_ATP_ID_OB_C"/>
    <property type="match status" value="1"/>
</dbReference>
<dbReference type="Pfam" id="PF17758">
    <property type="entry name" value="Prot_ATP_ID_OB_N"/>
    <property type="match status" value="1"/>
</dbReference>
<dbReference type="SMART" id="SM00382">
    <property type="entry name" value="AAA"/>
    <property type="match status" value="1"/>
</dbReference>
<dbReference type="SUPFAM" id="SSF52540">
    <property type="entry name" value="P-loop containing nucleoside triphosphate hydrolases"/>
    <property type="match status" value="1"/>
</dbReference>
<dbReference type="PROSITE" id="PS00674">
    <property type="entry name" value="AAA"/>
    <property type="match status" value="1"/>
</dbReference>
<sequence length="538" mass="58305">MTAQNPSDQPSPTARELRLANHRLGAQNEKLTEALKASREKLAEINSRLADMAEPPSTYGTLLQLNGTGKTAEVFTSNRHMRLAVSPLLDRTDLQPGATVRLGENLQVVEVTGFADSGDVAAVVEVVGDRLIVADKLGEEAIVKAARPLQSLITNRELTTGDSVVVDRRSGWAFHMIPRAEVSSLVLEEVPDVSYENIGGLSNQIEQIRDAVELPFLHPEIYRHYGLRPPKGVLLYGPPGNGKTLIAKAVANSLSKSMGSSDKASRFADSYFLNVKGPELLNKFVGETERQIRQIFERARKIAHAGKPVIVFFDEMEAIFRTRGTGVSSDMESTVVPQLLSELDGVEGLDNVIVIGASNREELIDPAILRPGRLDVKIRVDRPDQEAALDILSKHIDASLPLAADLVAEHGGKEEAAAALCRAIAEELFRRDAAHRYVTLHLADGQTKDLYWADFVSGAMLANIVDRAKTFAIKRALSQAASTRDAAAEGGLNTADVLDAITAEINDSENLPDTTNPTEWARISGHATGRVVDITLAD</sequence>